<dbReference type="EMBL" id="AE000516">
    <property type="protein sequence ID" value="AAK46139.1"/>
    <property type="status" value="ALT_INIT"/>
    <property type="molecule type" value="Genomic_DNA"/>
</dbReference>
<dbReference type="PIR" id="C70720">
    <property type="entry name" value="C70720"/>
</dbReference>
<dbReference type="KEGG" id="mtc:MT1866"/>
<dbReference type="PATRIC" id="fig|83331.31.peg.2009"/>
<dbReference type="HOGENOM" id="CLU_000167_16_10_11"/>
<dbReference type="Proteomes" id="UP000001020">
    <property type="component" value="Chromosome"/>
</dbReference>
<dbReference type="GO" id="GO:0009279">
    <property type="term" value="C:cell outer membrane"/>
    <property type="evidence" value="ECO:0007669"/>
    <property type="project" value="UniProtKB-SubCell"/>
</dbReference>
<dbReference type="GO" id="GO:0009986">
    <property type="term" value="C:cell surface"/>
    <property type="evidence" value="ECO:0007669"/>
    <property type="project" value="UniProtKB-SubCell"/>
</dbReference>
<dbReference type="GO" id="GO:0005576">
    <property type="term" value="C:extracellular region"/>
    <property type="evidence" value="ECO:0007669"/>
    <property type="project" value="UniProtKB-KW"/>
</dbReference>
<dbReference type="FunFam" id="1.10.287.850:FF:000001">
    <property type="entry name" value="PE_PGRS39"/>
    <property type="match status" value="1"/>
</dbReference>
<dbReference type="Gene3D" id="1.10.287.850">
    <property type="entry name" value="HP0062-like domain"/>
    <property type="match status" value="1"/>
</dbReference>
<dbReference type="InterPro" id="IPR000084">
    <property type="entry name" value="PE-PGRS_N"/>
</dbReference>
<dbReference type="InterPro" id="IPR048996">
    <property type="entry name" value="PGRS_rpt"/>
</dbReference>
<dbReference type="Pfam" id="PF00934">
    <property type="entry name" value="PE"/>
    <property type="match status" value="1"/>
</dbReference>
<dbReference type="Pfam" id="PF21526">
    <property type="entry name" value="PGRS"/>
    <property type="match status" value="1"/>
</dbReference>
<dbReference type="SUPFAM" id="SSF140459">
    <property type="entry name" value="PE/PPE dimer-like"/>
    <property type="match status" value="1"/>
</dbReference>
<keyword id="KW-0998">Cell outer membrane</keyword>
<keyword id="KW-0134">Cell wall</keyword>
<keyword id="KW-0472">Membrane</keyword>
<keyword id="KW-1185">Reference proteome</keyword>
<keyword id="KW-0964">Secreted</keyword>
<keyword id="KW-0843">Virulence</keyword>
<proteinExistence type="inferred from homology"/>
<organism>
    <name type="scientific">Mycobacterium tuberculosis (strain CDC 1551 / Oshkosh)</name>
    <dbReference type="NCBI Taxonomy" id="83331"/>
    <lineage>
        <taxon>Bacteria</taxon>
        <taxon>Bacillati</taxon>
        <taxon>Actinomycetota</taxon>
        <taxon>Actinomycetes</taxon>
        <taxon>Mycobacteriales</taxon>
        <taxon>Mycobacteriaceae</taxon>
        <taxon>Mycobacterium</taxon>
        <taxon>Mycobacterium tuberculosis complex</taxon>
    </lineage>
</organism>
<accession>P9WIF4</accession>
<accession>L0TAP6</accession>
<accession>Q50615</accession>
<sequence>MSFVVTIPEALAAVATDLAGIGSTIGTANAAAAVPTTTVLAAAADEVSAAMAALFSGHAQAYQALSAQAALFHEQFVRALTAGAGSYAAAEAASAAPLEGVLDVINAPALALLGRPLIGNGANGAPGTGANGGDGGILIGNGGAGGSGAAGMPGGNGGAAGLFGNGGAGGAGGNVASGTAGFGGAGGAGGNGGLLFGAGGAGGVGGLAADAGDGGAGGDGGLFFGVGGAGGAGGTGTNVTGGAGGAGGNGGLLFGAGGVGGVGGDGVAFLGTAPGGPGGAGGAGGLFGVGGAGGAGGIGLVGNGGAGGSGGSALLWGDGGAGGAGGVGSTTGGAGGAGGNAGLLVGAGGAGGAGALGGGATGVGGAGGNGGTAGLLFGAGGAGGAGGFGFGGAGGAGGLGGKAGLIGDGGDGGAGGNGTGAKGGDGGAGGGAILVGNGGNGGNAGSGTPNGSAGTGGAGGLLGKNGMNGLP</sequence>
<protein>
    <recommendedName>
        <fullName evidence="3">PE-PGRS family protein PE_PGRS33</fullName>
    </recommendedName>
</protein>
<comment type="function">
    <text evidence="1">Induces TNF-alpha release through human Toll-like receptor 2 (TLR2) signaling pathway, leading to macrophage apoptosis.</text>
</comment>
<comment type="subunit">
    <text evidence="1">Interacts with human TLR2.</text>
</comment>
<comment type="subcellular location">
    <subcellularLocation>
        <location evidence="1">Secreted</location>
        <location evidence="1">Cell wall</location>
    </subcellularLocation>
    <subcellularLocation>
        <location evidence="1">Cell surface</location>
    </subcellularLocation>
    <subcellularLocation>
        <location evidence="1">Cell outer membrane</location>
    </subcellularLocation>
    <text evidence="1">Exported to the cell surface via the ESX-5 / type VII secretion system (T7SS).</text>
</comment>
<comment type="domain">
    <text evidence="1">Contains an N-terminal PE domain, followed by a conserved linker region and a C-terminal PGRS domain.</text>
</comment>
<comment type="similarity">
    <text evidence="3">Belongs to the mycobacterial PE family. PGRS subfamily.</text>
</comment>
<comment type="sequence caution" evidence="3">
    <conflict type="erroneous initiation">
        <sequence resource="EMBL-CDS" id="AAK46139"/>
    </conflict>
    <text>Extended N-terminus.</text>
</comment>
<gene>
    <name type="primary">PE_PGRS33</name>
    <name type="ordered locus">MT1866</name>
</gene>
<name>PG33_MYCTO</name>
<evidence type="ECO:0000250" key="1">
    <source>
        <dbReference type="UniProtKB" id="P9WIF5"/>
    </source>
</evidence>
<evidence type="ECO:0000255" key="2"/>
<evidence type="ECO:0000305" key="3"/>
<feature type="chain" id="PRO_0000428016" description="PE-PGRS family protein PE_PGRS33">
    <location>
        <begin position="1"/>
        <end position="471"/>
    </location>
</feature>
<feature type="domain" description="PE" evidence="2">
    <location>
        <begin position="1"/>
        <end position="93"/>
    </location>
</feature>
<feature type="region of interest" description="Essential for translocation to the cell surface" evidence="1">
    <location>
        <begin position="1"/>
        <end position="30"/>
    </location>
</feature>
<feature type="region of interest" description="Interacts with TLR2" evidence="1">
    <location>
        <begin position="140"/>
        <end position="230"/>
    </location>
</feature>
<reference key="1">
    <citation type="journal article" date="2002" name="J. Bacteriol.">
        <title>Whole-genome comparison of Mycobacterium tuberculosis clinical and laboratory strains.</title>
        <authorList>
            <person name="Fleischmann R.D."/>
            <person name="Alland D."/>
            <person name="Eisen J.A."/>
            <person name="Carpenter L."/>
            <person name="White O."/>
            <person name="Peterson J.D."/>
            <person name="DeBoy R.T."/>
            <person name="Dodson R.J."/>
            <person name="Gwinn M.L."/>
            <person name="Haft D.H."/>
            <person name="Hickey E.K."/>
            <person name="Kolonay J.F."/>
            <person name="Nelson W.C."/>
            <person name="Umayam L.A."/>
            <person name="Ermolaeva M.D."/>
            <person name="Salzberg S.L."/>
            <person name="Delcher A."/>
            <person name="Utterback T.R."/>
            <person name="Weidman J.F."/>
            <person name="Khouri H.M."/>
            <person name="Gill J."/>
            <person name="Mikula A."/>
            <person name="Bishai W."/>
            <person name="Jacobs W.R. Jr."/>
            <person name="Venter J.C."/>
            <person name="Fraser C.M."/>
        </authorList>
    </citation>
    <scope>NUCLEOTIDE SEQUENCE [LARGE SCALE GENOMIC DNA]</scope>
    <source>
        <strain>CDC 1551 / Oshkosh</strain>
    </source>
</reference>